<comment type="function">
    <text evidence="1">Binds to a retinoid X receptor (RXR) responsive element from the cellular retinol-binding protein II promoter (CRBPII-RXRE). Inhibits the 9-cis-retinoic acid-dependent RXR alpha transcription activation of the retinoic acid responsive element. May participate in the transmission of nuclear signals during development and in the adult, as illustrated by the down-modulation of the RXR alpha activities (By similarity).</text>
</comment>
<comment type="subunit">
    <text evidence="1 2">Interacts with SMAD2 (By similarity). Interacts with CTBP, SMAD3 and HDAC1.</text>
</comment>
<comment type="subcellular location">
    <subcellularLocation>
        <location>Nucleus</location>
    </subcellularLocation>
</comment>
<comment type="alternative products">
    <event type="alternative splicing"/>
    <isoform>
        <id>P70284-1</id>
        <name>1</name>
        <sequence type="displayed"/>
    </isoform>
    <isoform>
        <id>P70284-2</id>
        <name>2</name>
        <sequence type="described" ref="VSP_002297"/>
    </isoform>
</comment>
<comment type="similarity">
    <text evidence="6">Belongs to the TALE/TGIF homeobox family.</text>
</comment>
<gene>
    <name type="primary">Tgif1</name>
    <name type="synonym">Tgif</name>
</gene>
<dbReference type="EMBL" id="X89749">
    <property type="protein sequence ID" value="CAA61896.1"/>
    <property type="molecule type" value="mRNA"/>
</dbReference>
<dbReference type="EMBL" id="BC005724">
    <property type="protein sequence ID" value="AAH05724.1"/>
    <property type="molecule type" value="mRNA"/>
</dbReference>
<dbReference type="EMBL" id="BC012700">
    <property type="protein sequence ID" value="AAH12700.1"/>
    <property type="molecule type" value="mRNA"/>
</dbReference>
<dbReference type="CCDS" id="CCDS37683.1">
    <molecule id="P70284-1"/>
</dbReference>
<dbReference type="CCDS" id="CCDS50174.1">
    <molecule id="P70284-2"/>
</dbReference>
<dbReference type="RefSeq" id="NP_001157546.1">
    <molecule id="P70284-2"/>
    <property type="nucleotide sequence ID" value="NM_001164074.1"/>
</dbReference>
<dbReference type="RefSeq" id="NP_001157548.1">
    <molecule id="P70284-2"/>
    <property type="nucleotide sequence ID" value="NM_001164076.1"/>
</dbReference>
<dbReference type="RefSeq" id="NP_001157549.1">
    <molecule id="P70284-2"/>
    <property type="nucleotide sequence ID" value="NM_001164077.1"/>
</dbReference>
<dbReference type="RefSeq" id="NP_001411891.1">
    <molecule id="P70284-2"/>
    <property type="nucleotide sequence ID" value="NM_001424962.1"/>
</dbReference>
<dbReference type="RefSeq" id="NP_033398.2">
    <molecule id="P70284-1"/>
    <property type="nucleotide sequence ID" value="NM_009372.3"/>
</dbReference>
<dbReference type="RefSeq" id="XP_006524095.1">
    <property type="nucleotide sequence ID" value="XM_006524032.2"/>
</dbReference>
<dbReference type="BMRB" id="P70284"/>
<dbReference type="SMR" id="P70284"/>
<dbReference type="BioGRID" id="204166">
    <property type="interactions" value="6"/>
</dbReference>
<dbReference type="FunCoup" id="P70284">
    <property type="interactions" value="2634"/>
</dbReference>
<dbReference type="STRING" id="10090.ENSMUSP00000130930"/>
<dbReference type="GlyGen" id="P70284">
    <property type="glycosylation" value="1 site"/>
</dbReference>
<dbReference type="iPTMnet" id="P70284"/>
<dbReference type="PhosphoSitePlus" id="P70284"/>
<dbReference type="PaxDb" id="10090-ENSMUSP00000130930"/>
<dbReference type="ProteomicsDB" id="262898">
    <molecule id="P70284-1"/>
</dbReference>
<dbReference type="ProteomicsDB" id="262899">
    <molecule id="P70284-2"/>
</dbReference>
<dbReference type="Antibodypedia" id="3890">
    <property type="antibodies" value="402 antibodies from 34 providers"/>
</dbReference>
<dbReference type="DNASU" id="21815"/>
<dbReference type="Ensembl" id="ENSMUST00000059775.15">
    <molecule id="P70284-1"/>
    <property type="protein sequence ID" value="ENSMUSP00000060512.9"/>
    <property type="gene ID" value="ENSMUSG00000047407.18"/>
</dbReference>
<dbReference type="Ensembl" id="ENSMUST00000118283.8">
    <molecule id="P70284-2"/>
    <property type="protein sequence ID" value="ENSMUSP00000113192.2"/>
    <property type="gene ID" value="ENSMUSG00000047407.18"/>
</dbReference>
<dbReference type="Ensembl" id="ENSMUST00000172229.8">
    <molecule id="P70284-2"/>
    <property type="protein sequence ID" value="ENSMUSP00000127139.2"/>
    <property type="gene ID" value="ENSMUSG00000047407.18"/>
</dbReference>
<dbReference type="GeneID" id="21815"/>
<dbReference type="KEGG" id="mmu:21815"/>
<dbReference type="UCSC" id="uc008dlp.2">
    <molecule id="P70284-1"/>
    <property type="organism name" value="mouse"/>
</dbReference>
<dbReference type="AGR" id="MGI:1194497"/>
<dbReference type="CTD" id="7050"/>
<dbReference type="MGI" id="MGI:1194497">
    <property type="gene designation" value="Tgif1"/>
</dbReference>
<dbReference type="VEuPathDB" id="HostDB:ENSMUSG00000047407"/>
<dbReference type="eggNOG" id="KOG0773">
    <property type="taxonomic scope" value="Eukaryota"/>
</dbReference>
<dbReference type="GeneTree" id="ENSGT00940000155230"/>
<dbReference type="HOGENOM" id="CLU_034318_2_0_1"/>
<dbReference type="InParanoid" id="P70284"/>
<dbReference type="OMA" id="CSAGPNP"/>
<dbReference type="OrthoDB" id="10056939at2759"/>
<dbReference type="PhylomeDB" id="P70284"/>
<dbReference type="Reactome" id="R-MMU-2173795">
    <property type="pathway name" value="Downregulation of SMAD2/3:SMAD4 transcriptional activity"/>
</dbReference>
<dbReference type="BioGRID-ORCS" id="21815">
    <property type="hits" value="21 hits in 83 CRISPR screens"/>
</dbReference>
<dbReference type="ChiTaRS" id="Tgif1">
    <property type="organism name" value="mouse"/>
</dbReference>
<dbReference type="PRO" id="PR:P70284"/>
<dbReference type="Proteomes" id="UP000000589">
    <property type="component" value="Chromosome 17"/>
</dbReference>
<dbReference type="RNAct" id="P70284">
    <property type="molecule type" value="protein"/>
</dbReference>
<dbReference type="Bgee" id="ENSMUSG00000047407">
    <property type="expression patterns" value="Expressed in embryonic post-anal tail and 224 other cell types or tissues"/>
</dbReference>
<dbReference type="ExpressionAtlas" id="P70284">
    <property type="expression patterns" value="baseline and differential"/>
</dbReference>
<dbReference type="GO" id="GO:0005654">
    <property type="term" value="C:nucleoplasm"/>
    <property type="evidence" value="ECO:0007669"/>
    <property type="project" value="Ensembl"/>
</dbReference>
<dbReference type="GO" id="GO:0005634">
    <property type="term" value="C:nucleus"/>
    <property type="evidence" value="ECO:0000314"/>
    <property type="project" value="MGI"/>
</dbReference>
<dbReference type="GO" id="GO:0003682">
    <property type="term" value="F:chromatin binding"/>
    <property type="evidence" value="ECO:0000314"/>
    <property type="project" value="MGI"/>
</dbReference>
<dbReference type="GO" id="GO:0070410">
    <property type="term" value="F:co-SMAD binding"/>
    <property type="evidence" value="ECO:0007669"/>
    <property type="project" value="Ensembl"/>
</dbReference>
<dbReference type="GO" id="GO:0001227">
    <property type="term" value="F:DNA-binding transcription repressor activity, RNA polymerase II-specific"/>
    <property type="evidence" value="ECO:0007669"/>
    <property type="project" value="Ensembl"/>
</dbReference>
<dbReference type="GO" id="GO:0008432">
    <property type="term" value="F:JUN kinase binding"/>
    <property type="evidence" value="ECO:0000266"/>
    <property type="project" value="MGI"/>
</dbReference>
<dbReference type="GO" id="GO:0000978">
    <property type="term" value="F:RNA polymerase II cis-regulatory region sequence-specific DNA binding"/>
    <property type="evidence" value="ECO:0007669"/>
    <property type="project" value="Ensembl"/>
</dbReference>
<dbReference type="GO" id="GO:0035881">
    <property type="term" value="P:amacrine cell differentiation"/>
    <property type="evidence" value="ECO:0000314"/>
    <property type="project" value="MGI"/>
</dbReference>
<dbReference type="GO" id="GO:0008283">
    <property type="term" value="P:cell population proliferation"/>
    <property type="evidence" value="ECO:0000315"/>
    <property type="project" value="MGI"/>
</dbReference>
<dbReference type="GO" id="GO:0071363">
    <property type="term" value="P:cellular response to growth factor stimulus"/>
    <property type="evidence" value="ECO:0007669"/>
    <property type="project" value="Ensembl"/>
</dbReference>
<dbReference type="GO" id="GO:0007368">
    <property type="term" value="P:determination of left/right symmetry"/>
    <property type="evidence" value="ECO:0000315"/>
    <property type="project" value="MGI"/>
</dbReference>
<dbReference type="GO" id="GO:0009953">
    <property type="term" value="P:dorsal/ventral pattern formation"/>
    <property type="evidence" value="ECO:0000315"/>
    <property type="project" value="MGI"/>
</dbReference>
<dbReference type="GO" id="GO:0048144">
    <property type="term" value="P:fibroblast proliferation"/>
    <property type="evidence" value="ECO:0000315"/>
    <property type="project" value="MGI"/>
</dbReference>
<dbReference type="GO" id="GO:0008285">
    <property type="term" value="P:negative regulation of cell population proliferation"/>
    <property type="evidence" value="ECO:0000315"/>
    <property type="project" value="MGI"/>
</dbReference>
<dbReference type="GO" id="GO:0010629">
    <property type="term" value="P:negative regulation of gene expression"/>
    <property type="evidence" value="ECO:0007669"/>
    <property type="project" value="Ensembl"/>
</dbReference>
<dbReference type="GO" id="GO:0048387">
    <property type="term" value="P:negative regulation of retinoic acid receptor signaling pathway"/>
    <property type="evidence" value="ECO:0000315"/>
    <property type="project" value="MGI"/>
</dbReference>
<dbReference type="GO" id="GO:0000122">
    <property type="term" value="P:negative regulation of transcription by RNA polymerase II"/>
    <property type="evidence" value="ECO:0000316"/>
    <property type="project" value="MGI"/>
</dbReference>
<dbReference type="GO" id="GO:0001843">
    <property type="term" value="P:neural tube closure"/>
    <property type="evidence" value="ECO:0000315"/>
    <property type="project" value="MGI"/>
</dbReference>
<dbReference type="GO" id="GO:0030182">
    <property type="term" value="P:neuron differentiation"/>
    <property type="evidence" value="ECO:0000314"/>
    <property type="project" value="MGI"/>
</dbReference>
<dbReference type="GO" id="GO:0038092">
    <property type="term" value="P:nodal signaling pathway"/>
    <property type="evidence" value="ECO:0000316"/>
    <property type="project" value="MGI"/>
</dbReference>
<dbReference type="GO" id="GO:1902871">
    <property type="term" value="P:positive regulation of amacrine cell differentiation"/>
    <property type="evidence" value="ECO:0000314"/>
    <property type="project" value="MGI"/>
</dbReference>
<dbReference type="GO" id="GO:0048146">
    <property type="term" value="P:positive regulation of fibroblast proliferation"/>
    <property type="evidence" value="ECO:0000315"/>
    <property type="project" value="MGI"/>
</dbReference>
<dbReference type="GO" id="GO:0010470">
    <property type="term" value="P:regulation of gastrulation"/>
    <property type="evidence" value="ECO:0000316"/>
    <property type="project" value="MGI"/>
</dbReference>
<dbReference type="GO" id="GO:0009410">
    <property type="term" value="P:response to xenobiotic stimulus"/>
    <property type="evidence" value="ECO:0007669"/>
    <property type="project" value="Ensembl"/>
</dbReference>
<dbReference type="GO" id="GO:0060041">
    <property type="term" value="P:retina development in camera-type eye"/>
    <property type="evidence" value="ECO:0000314"/>
    <property type="project" value="MGI"/>
</dbReference>
<dbReference type="CDD" id="cd00086">
    <property type="entry name" value="homeodomain"/>
    <property type="match status" value="1"/>
</dbReference>
<dbReference type="FunFam" id="1.10.10.60:FF:000059">
    <property type="entry name" value="TGFB-induced factor homeobox 1"/>
    <property type="match status" value="1"/>
</dbReference>
<dbReference type="Gene3D" id="1.10.10.60">
    <property type="entry name" value="Homeodomain-like"/>
    <property type="match status" value="1"/>
</dbReference>
<dbReference type="InterPro" id="IPR001356">
    <property type="entry name" value="HD"/>
</dbReference>
<dbReference type="InterPro" id="IPR009057">
    <property type="entry name" value="Homeodomain-like_sf"/>
</dbReference>
<dbReference type="InterPro" id="IPR008422">
    <property type="entry name" value="KN_HD"/>
</dbReference>
<dbReference type="InterPro" id="IPR050224">
    <property type="entry name" value="TALE_homeobox"/>
</dbReference>
<dbReference type="PANTHER" id="PTHR11850">
    <property type="entry name" value="HOMEOBOX PROTEIN TRANSCRIPTION FACTORS"/>
    <property type="match status" value="1"/>
</dbReference>
<dbReference type="Pfam" id="PF05920">
    <property type="entry name" value="Homeobox_KN"/>
    <property type="match status" value="1"/>
</dbReference>
<dbReference type="SMART" id="SM00389">
    <property type="entry name" value="HOX"/>
    <property type="match status" value="1"/>
</dbReference>
<dbReference type="SUPFAM" id="SSF46689">
    <property type="entry name" value="Homeodomain-like"/>
    <property type="match status" value="1"/>
</dbReference>
<dbReference type="PROSITE" id="PS50071">
    <property type="entry name" value="HOMEOBOX_2"/>
    <property type="match status" value="1"/>
</dbReference>
<accession>P70284</accession>
<accession>Q921F9</accession>
<accession>Q99JS3</accession>
<evidence type="ECO:0000250" key="1"/>
<evidence type="ECO:0000250" key="2">
    <source>
        <dbReference type="UniProtKB" id="Q15583"/>
    </source>
</evidence>
<evidence type="ECO:0000255" key="3">
    <source>
        <dbReference type="PROSITE-ProRule" id="PRU00108"/>
    </source>
</evidence>
<evidence type="ECO:0000256" key="4">
    <source>
        <dbReference type="SAM" id="MobiDB-lite"/>
    </source>
</evidence>
<evidence type="ECO:0000303" key="5">
    <source>
    </source>
</evidence>
<evidence type="ECO:0000305" key="6"/>
<organism>
    <name type="scientific">Mus musculus</name>
    <name type="common">Mouse</name>
    <dbReference type="NCBI Taxonomy" id="10090"/>
    <lineage>
        <taxon>Eukaryota</taxon>
        <taxon>Metazoa</taxon>
        <taxon>Chordata</taxon>
        <taxon>Craniata</taxon>
        <taxon>Vertebrata</taxon>
        <taxon>Euteleostomi</taxon>
        <taxon>Mammalia</taxon>
        <taxon>Eutheria</taxon>
        <taxon>Euarchontoglires</taxon>
        <taxon>Glires</taxon>
        <taxon>Rodentia</taxon>
        <taxon>Myomorpha</taxon>
        <taxon>Muroidea</taxon>
        <taxon>Muridae</taxon>
        <taxon>Murinae</taxon>
        <taxon>Mus</taxon>
        <taxon>Mus</taxon>
    </lineage>
</organism>
<feature type="chain" id="PRO_0000049320" description="Homeobox protein TGIF1">
    <location>
        <begin position="1"/>
        <end position="272"/>
    </location>
</feature>
<feature type="DNA-binding region" description="Homeobox; TALE-type" evidence="3">
    <location>
        <begin position="35"/>
        <end position="97"/>
    </location>
</feature>
<feature type="region of interest" description="Disordered" evidence="4">
    <location>
        <begin position="1"/>
        <end position="41"/>
    </location>
</feature>
<feature type="region of interest" description="Disordered" evidence="4">
    <location>
        <begin position="216"/>
        <end position="244"/>
    </location>
</feature>
<feature type="short sequence motif" description="CTBP-binding motif">
    <location>
        <begin position="24"/>
        <end position="28"/>
    </location>
</feature>
<feature type="compositionally biased region" description="Low complexity" evidence="4">
    <location>
        <begin position="22"/>
        <end position="33"/>
    </location>
</feature>
<feature type="compositionally biased region" description="Polar residues" evidence="4">
    <location>
        <begin position="222"/>
        <end position="233"/>
    </location>
</feature>
<feature type="splice variant" id="VSP_002297" description="In isoform 2." evidence="5">
    <location>
        <begin position="1"/>
        <end position="20"/>
    </location>
</feature>
<feature type="sequence conflict" description="In Ref. 1; CAA61896." evidence="6" ref="1">
    <original>K</original>
    <variation>M</variation>
    <location>
        <position position="35"/>
    </location>
</feature>
<name>TGIF1_MOUSE</name>
<reference key="1">
    <citation type="journal article" date="1996" name="Dev. Dyn.">
        <title>Expression of a novel murine homeobox gene in the developing cerebellar external granular layer during its proliferation.</title>
        <authorList>
            <person name="Bertolino E."/>
            <person name="Wildt S."/>
            <person name="Richards G."/>
            <person name="Clerc R.G."/>
        </authorList>
    </citation>
    <scope>NUCLEOTIDE SEQUENCE [MRNA] (ISOFORM 1)</scope>
    <source>
        <strain>BALB/cJ</strain>
        <tissue>Liver</tissue>
    </source>
</reference>
<reference key="2">
    <citation type="journal article" date="2004" name="Genome Res.">
        <title>The status, quality, and expansion of the NIH full-length cDNA project: the Mammalian Gene Collection (MGC).</title>
        <authorList>
            <consortium name="The MGC Project Team"/>
        </authorList>
    </citation>
    <scope>NUCLEOTIDE SEQUENCE [LARGE SCALE MRNA] (ISOFORMS 1 AND 2)</scope>
    <source>
        <tissue>Mammary fibroblast</tissue>
        <tissue>Mammary gland</tissue>
    </source>
</reference>
<reference key="3">
    <citation type="journal article" date="2010" name="Cell">
        <title>A tissue-specific atlas of mouse protein phosphorylation and expression.</title>
        <authorList>
            <person name="Huttlin E.L."/>
            <person name="Jedrychowski M.P."/>
            <person name="Elias J.E."/>
            <person name="Goswami T."/>
            <person name="Rad R."/>
            <person name="Beausoleil S.A."/>
            <person name="Villen J."/>
            <person name="Haas W."/>
            <person name="Sowa M.E."/>
            <person name="Gygi S.P."/>
        </authorList>
    </citation>
    <scope>IDENTIFICATION BY MASS SPECTROMETRY [LARGE SCALE ANALYSIS]</scope>
    <source>
        <tissue>Testis</tissue>
    </source>
</reference>
<sequence>MKSKKGLVAASGSDSEDEDSMDSPLDLSSSAASGKRRRRGNLPKESVQILRDWLYEHRYNAYPSEQEKALLSQQTHLSTLQVCNWFINARRRLLPDMLRKDGKDPNQFTISRRGAKISEASSIEAAMGIKNFMPTLEESPFHSCVVGPNPTLGRPVSPKPPSPGSILARPSVICHTTVTALKDGPFSLCQPIGVGQSTDVPQIAPSNFTDTSLVYPEDTCKSGPSPNPQSGLFNTPPPTPPDLNQDFSGFQLLVDVALKRAAEMELQAKLTA</sequence>
<keyword id="KW-0025">Alternative splicing</keyword>
<keyword id="KW-0238">DNA-binding</keyword>
<keyword id="KW-0371">Homeobox</keyword>
<keyword id="KW-0539">Nucleus</keyword>
<keyword id="KW-1185">Reference proteome</keyword>
<keyword id="KW-0678">Repressor</keyword>
<keyword id="KW-0804">Transcription</keyword>
<keyword id="KW-0805">Transcription regulation</keyword>
<proteinExistence type="evidence at protein level"/>
<protein>
    <recommendedName>
        <fullName>Homeobox protein TGIF1</fullName>
    </recommendedName>
    <alternativeName>
        <fullName>5'-TG-3'-interacting factor 1</fullName>
    </alternativeName>
</protein>